<proteinExistence type="inferred from homology"/>
<comment type="function">
    <text evidence="1">Responsible for the release of ribosomes from messenger RNA at the termination of protein biosynthesis. May increase the efficiency of translation by recycling ribosomes from one round of translation to another.</text>
</comment>
<comment type="subcellular location">
    <subcellularLocation>
        <location evidence="1">Cytoplasm</location>
    </subcellularLocation>
</comment>
<comment type="similarity">
    <text evidence="1">Belongs to the RRF family.</text>
</comment>
<reference key="1">
    <citation type="submission" date="2005-03" db="EMBL/GenBank/DDBJ databases">
        <title>Brevibacillus brevis strain 47, complete genome.</title>
        <authorList>
            <person name="Hosoyama A."/>
            <person name="Yamada R."/>
            <person name="Hongo Y."/>
            <person name="Terui Y."/>
            <person name="Ankai A."/>
            <person name="Masuyama W."/>
            <person name="Sekiguchi M."/>
            <person name="Takeda T."/>
            <person name="Asano K."/>
            <person name="Ohji S."/>
            <person name="Ichikawa N."/>
            <person name="Narita S."/>
            <person name="Aoki N."/>
            <person name="Miura H."/>
            <person name="Matsushita S."/>
            <person name="Sekigawa T."/>
            <person name="Yamagata H."/>
            <person name="Yoshikawa H."/>
            <person name="Udaka S."/>
            <person name="Tanikawa S."/>
            <person name="Fujita N."/>
        </authorList>
    </citation>
    <scope>NUCLEOTIDE SEQUENCE [LARGE SCALE GENOMIC DNA]</scope>
    <source>
        <strain>47 / JCM 6285 / NBRC 100599</strain>
    </source>
</reference>
<keyword id="KW-0963">Cytoplasm</keyword>
<keyword id="KW-0648">Protein biosynthesis</keyword>
<keyword id="KW-1185">Reference proteome</keyword>
<name>RRF_BREBN</name>
<feature type="chain" id="PRO_1000194904" description="Ribosome-recycling factor">
    <location>
        <begin position="1"/>
        <end position="185"/>
    </location>
</feature>
<sequence>MPQTVLNDMEDRMNKAINALKRDLSSLRAGRANPAMLDRVTVDYYGTPTPISQLANISVPEPRMLTIQPWDKTALKEIDRALQQSDLGISPSNDGVIIRLIIPPLTEERRKELVKLAGKGGEEAKVAIRNIRRDANDEIKKLEKAATISEDDSRRHQETIQKTTDKFIAEVDKIVKDKEKDILEV</sequence>
<dbReference type="EMBL" id="AP008955">
    <property type="protein sequence ID" value="BAH44422.1"/>
    <property type="molecule type" value="Genomic_DNA"/>
</dbReference>
<dbReference type="RefSeq" id="WP_015891724.1">
    <property type="nucleotide sequence ID" value="NC_012491.1"/>
</dbReference>
<dbReference type="SMR" id="C0ZF63"/>
<dbReference type="STRING" id="358681.BBR47_34450"/>
<dbReference type="GeneID" id="87583875"/>
<dbReference type="KEGG" id="bbe:BBR47_34450"/>
<dbReference type="eggNOG" id="COG0233">
    <property type="taxonomic scope" value="Bacteria"/>
</dbReference>
<dbReference type="HOGENOM" id="CLU_073981_2_0_9"/>
<dbReference type="Proteomes" id="UP000001877">
    <property type="component" value="Chromosome"/>
</dbReference>
<dbReference type="GO" id="GO:0005737">
    <property type="term" value="C:cytoplasm"/>
    <property type="evidence" value="ECO:0007669"/>
    <property type="project" value="UniProtKB-SubCell"/>
</dbReference>
<dbReference type="GO" id="GO:0043023">
    <property type="term" value="F:ribosomal large subunit binding"/>
    <property type="evidence" value="ECO:0007669"/>
    <property type="project" value="TreeGrafter"/>
</dbReference>
<dbReference type="GO" id="GO:0006415">
    <property type="term" value="P:translational termination"/>
    <property type="evidence" value="ECO:0007669"/>
    <property type="project" value="UniProtKB-UniRule"/>
</dbReference>
<dbReference type="CDD" id="cd00520">
    <property type="entry name" value="RRF"/>
    <property type="match status" value="1"/>
</dbReference>
<dbReference type="FunFam" id="1.10.132.20:FF:000001">
    <property type="entry name" value="Ribosome-recycling factor"/>
    <property type="match status" value="1"/>
</dbReference>
<dbReference type="FunFam" id="3.30.1360.40:FF:000001">
    <property type="entry name" value="Ribosome-recycling factor"/>
    <property type="match status" value="1"/>
</dbReference>
<dbReference type="Gene3D" id="3.30.1360.40">
    <property type="match status" value="1"/>
</dbReference>
<dbReference type="Gene3D" id="1.10.132.20">
    <property type="entry name" value="Ribosome-recycling factor"/>
    <property type="match status" value="1"/>
</dbReference>
<dbReference type="HAMAP" id="MF_00040">
    <property type="entry name" value="RRF"/>
    <property type="match status" value="1"/>
</dbReference>
<dbReference type="InterPro" id="IPR002661">
    <property type="entry name" value="Ribosome_recyc_fac"/>
</dbReference>
<dbReference type="InterPro" id="IPR023584">
    <property type="entry name" value="Ribosome_recyc_fac_dom"/>
</dbReference>
<dbReference type="InterPro" id="IPR036191">
    <property type="entry name" value="RRF_sf"/>
</dbReference>
<dbReference type="NCBIfam" id="TIGR00496">
    <property type="entry name" value="frr"/>
    <property type="match status" value="1"/>
</dbReference>
<dbReference type="PANTHER" id="PTHR20982:SF3">
    <property type="entry name" value="MITOCHONDRIAL RIBOSOME RECYCLING FACTOR PSEUDO 1"/>
    <property type="match status" value="1"/>
</dbReference>
<dbReference type="PANTHER" id="PTHR20982">
    <property type="entry name" value="RIBOSOME RECYCLING FACTOR"/>
    <property type="match status" value="1"/>
</dbReference>
<dbReference type="Pfam" id="PF01765">
    <property type="entry name" value="RRF"/>
    <property type="match status" value="1"/>
</dbReference>
<dbReference type="SUPFAM" id="SSF55194">
    <property type="entry name" value="Ribosome recycling factor, RRF"/>
    <property type="match status" value="1"/>
</dbReference>
<evidence type="ECO:0000255" key="1">
    <source>
        <dbReference type="HAMAP-Rule" id="MF_00040"/>
    </source>
</evidence>
<gene>
    <name evidence="1" type="primary">frr</name>
    <name type="ordered locus">BBR47_34450</name>
</gene>
<organism>
    <name type="scientific">Brevibacillus brevis (strain 47 / JCM 6285 / NBRC 100599)</name>
    <dbReference type="NCBI Taxonomy" id="358681"/>
    <lineage>
        <taxon>Bacteria</taxon>
        <taxon>Bacillati</taxon>
        <taxon>Bacillota</taxon>
        <taxon>Bacilli</taxon>
        <taxon>Bacillales</taxon>
        <taxon>Paenibacillaceae</taxon>
        <taxon>Brevibacillus</taxon>
    </lineage>
</organism>
<accession>C0ZF63</accession>
<protein>
    <recommendedName>
        <fullName evidence="1">Ribosome-recycling factor</fullName>
        <shortName evidence="1">RRF</shortName>
    </recommendedName>
    <alternativeName>
        <fullName evidence="1">Ribosome-releasing factor</fullName>
    </alternativeName>
</protein>